<accession>Q9I2V5</accession>
<proteinExistence type="inferred from homology"/>
<organism>
    <name type="scientific">Pseudomonas aeruginosa (strain ATCC 15692 / DSM 22644 / CIP 104116 / JCM 14847 / LMG 12228 / 1C / PRS 101 / PAO1)</name>
    <dbReference type="NCBI Taxonomy" id="208964"/>
    <lineage>
        <taxon>Bacteria</taxon>
        <taxon>Pseudomonadati</taxon>
        <taxon>Pseudomonadota</taxon>
        <taxon>Gammaproteobacteria</taxon>
        <taxon>Pseudomonadales</taxon>
        <taxon>Pseudomonadaceae</taxon>
        <taxon>Pseudomonas</taxon>
    </lineage>
</organism>
<evidence type="ECO:0000250" key="1">
    <source>
        <dbReference type="UniProtKB" id="P36683"/>
    </source>
</evidence>
<evidence type="ECO:0000305" key="2"/>
<feature type="chain" id="PRO_0000287740" description="Aconitate hydratase B">
    <location>
        <begin position="1"/>
        <end position="869"/>
    </location>
</feature>
<feature type="binding site" evidence="1">
    <location>
        <position position="191"/>
    </location>
    <ligand>
        <name>substrate</name>
    </ligand>
</feature>
<feature type="binding site" evidence="1">
    <location>
        <begin position="244"/>
        <end position="246"/>
    </location>
    <ligand>
        <name>substrate</name>
    </ligand>
</feature>
<feature type="binding site" evidence="1">
    <location>
        <begin position="417"/>
        <end position="419"/>
    </location>
    <ligand>
        <name>substrate</name>
    </ligand>
</feature>
<feature type="binding site" evidence="1">
    <location>
        <position position="501"/>
    </location>
    <ligand>
        <name>substrate</name>
    </ligand>
</feature>
<feature type="binding site" evidence="1">
    <location>
        <position position="713"/>
    </location>
    <ligand>
        <name>[4Fe-4S] cluster</name>
        <dbReference type="ChEBI" id="CHEBI:49883"/>
    </ligand>
</feature>
<feature type="binding site" evidence="1">
    <location>
        <position position="772"/>
    </location>
    <ligand>
        <name>[4Fe-4S] cluster</name>
        <dbReference type="ChEBI" id="CHEBI:49883"/>
    </ligand>
</feature>
<feature type="binding site" evidence="1">
    <location>
        <position position="775"/>
    </location>
    <ligand>
        <name>[4Fe-4S] cluster</name>
        <dbReference type="ChEBI" id="CHEBI:49883"/>
    </ligand>
</feature>
<feature type="binding site" evidence="1">
    <location>
        <position position="794"/>
    </location>
    <ligand>
        <name>substrate</name>
    </ligand>
</feature>
<feature type="binding site" evidence="1">
    <location>
        <position position="799"/>
    </location>
    <ligand>
        <name>substrate</name>
    </ligand>
</feature>
<gene>
    <name type="primary">acnB</name>
    <name type="ordered locus">PA1787</name>
</gene>
<reference key="1">
    <citation type="journal article" date="2000" name="Nature">
        <title>Complete genome sequence of Pseudomonas aeruginosa PAO1, an opportunistic pathogen.</title>
        <authorList>
            <person name="Stover C.K."/>
            <person name="Pham X.-Q.T."/>
            <person name="Erwin A.L."/>
            <person name="Mizoguchi S.D."/>
            <person name="Warrener P."/>
            <person name="Hickey M.J."/>
            <person name="Brinkman F.S.L."/>
            <person name="Hufnagle W.O."/>
            <person name="Kowalik D.J."/>
            <person name="Lagrou M."/>
            <person name="Garber R.L."/>
            <person name="Goltry L."/>
            <person name="Tolentino E."/>
            <person name="Westbrock-Wadman S."/>
            <person name="Yuan Y."/>
            <person name="Brody L.L."/>
            <person name="Coulter S.N."/>
            <person name="Folger K.R."/>
            <person name="Kas A."/>
            <person name="Larbig K."/>
            <person name="Lim R.M."/>
            <person name="Smith K.A."/>
            <person name="Spencer D.H."/>
            <person name="Wong G.K.-S."/>
            <person name="Wu Z."/>
            <person name="Paulsen I.T."/>
            <person name="Reizer J."/>
            <person name="Saier M.H. Jr."/>
            <person name="Hancock R.E.W."/>
            <person name="Lory S."/>
            <person name="Olson M.V."/>
        </authorList>
    </citation>
    <scope>NUCLEOTIDE SEQUENCE [LARGE SCALE GENOMIC DNA]</scope>
    <source>
        <strain>ATCC 15692 / DSM 22644 / CIP 104116 / JCM 14847 / LMG 12228 / 1C / PRS 101 / PAO1</strain>
    </source>
</reference>
<dbReference type="EC" id="4.2.1.3" evidence="1"/>
<dbReference type="EC" id="4.2.1.99" evidence="1"/>
<dbReference type="EMBL" id="AE004091">
    <property type="protein sequence ID" value="AAG05176.1"/>
    <property type="molecule type" value="Genomic_DNA"/>
</dbReference>
<dbReference type="PIR" id="G83422">
    <property type="entry name" value="G83422"/>
</dbReference>
<dbReference type="RefSeq" id="NP_250478.1">
    <property type="nucleotide sequence ID" value="NC_002516.2"/>
</dbReference>
<dbReference type="RefSeq" id="WP_003087875.1">
    <property type="nucleotide sequence ID" value="NZ_QZGE01000003.1"/>
</dbReference>
<dbReference type="SMR" id="Q9I2V5"/>
<dbReference type="FunCoup" id="Q9I2V5">
    <property type="interactions" value="321"/>
</dbReference>
<dbReference type="STRING" id="208964.PA1787"/>
<dbReference type="PaxDb" id="208964-PA1787"/>
<dbReference type="GeneID" id="879984"/>
<dbReference type="KEGG" id="pae:PA1787"/>
<dbReference type="PATRIC" id="fig|208964.12.peg.1853"/>
<dbReference type="PseudoCAP" id="PA1787"/>
<dbReference type="HOGENOM" id="CLU_016536_0_0_6"/>
<dbReference type="InParanoid" id="Q9I2V5"/>
<dbReference type="OrthoDB" id="9758061at2"/>
<dbReference type="PhylomeDB" id="Q9I2V5"/>
<dbReference type="BioCyc" id="PAER208964:G1FZ6-1819-MONOMER"/>
<dbReference type="UniPathway" id="UPA00223">
    <property type="reaction ID" value="UER00718"/>
</dbReference>
<dbReference type="UniPathway" id="UPA00946"/>
<dbReference type="Proteomes" id="UP000002438">
    <property type="component" value="Chromosome"/>
</dbReference>
<dbReference type="GO" id="GO:0005829">
    <property type="term" value="C:cytosol"/>
    <property type="evidence" value="ECO:0000318"/>
    <property type="project" value="GO_Central"/>
</dbReference>
<dbReference type="GO" id="GO:0047456">
    <property type="term" value="F:2-methylisocitrate dehydratase activity"/>
    <property type="evidence" value="ECO:0000250"/>
    <property type="project" value="UniProtKB"/>
</dbReference>
<dbReference type="GO" id="GO:0051539">
    <property type="term" value="F:4 iron, 4 sulfur cluster binding"/>
    <property type="evidence" value="ECO:0000250"/>
    <property type="project" value="UniProtKB"/>
</dbReference>
<dbReference type="GO" id="GO:0003994">
    <property type="term" value="F:aconitate hydratase activity"/>
    <property type="evidence" value="ECO:0000250"/>
    <property type="project" value="UniProtKB"/>
</dbReference>
<dbReference type="GO" id="GO:0046872">
    <property type="term" value="F:metal ion binding"/>
    <property type="evidence" value="ECO:0007669"/>
    <property type="project" value="UniProtKB-KW"/>
</dbReference>
<dbReference type="GO" id="GO:0003730">
    <property type="term" value="F:mRNA 3'-UTR binding"/>
    <property type="evidence" value="ECO:0000250"/>
    <property type="project" value="UniProtKB"/>
</dbReference>
<dbReference type="GO" id="GO:0003729">
    <property type="term" value="F:mRNA binding"/>
    <property type="evidence" value="ECO:0000250"/>
    <property type="project" value="UniProtKB"/>
</dbReference>
<dbReference type="GO" id="GO:0019629">
    <property type="term" value="P:propionate catabolic process, 2-methylcitrate cycle"/>
    <property type="evidence" value="ECO:0000250"/>
    <property type="project" value="UniProtKB"/>
</dbReference>
<dbReference type="GO" id="GO:0006099">
    <property type="term" value="P:tricarboxylic acid cycle"/>
    <property type="evidence" value="ECO:0000250"/>
    <property type="project" value="UniProtKB"/>
</dbReference>
<dbReference type="CDD" id="cd01581">
    <property type="entry name" value="AcnB"/>
    <property type="match status" value="1"/>
</dbReference>
<dbReference type="CDD" id="cd01576">
    <property type="entry name" value="AcnB_Swivel"/>
    <property type="match status" value="1"/>
</dbReference>
<dbReference type="FunFam" id="1.25.40.310:FF:000001">
    <property type="entry name" value="Aconitate hydratase B"/>
    <property type="match status" value="1"/>
</dbReference>
<dbReference type="FunFam" id="3.20.19.10:FF:000004">
    <property type="entry name" value="Aconitate hydratase B"/>
    <property type="match status" value="1"/>
</dbReference>
<dbReference type="FunFam" id="3.30.499.10:FF:000001">
    <property type="entry name" value="Aconitate hydratase B"/>
    <property type="match status" value="1"/>
</dbReference>
<dbReference type="FunFam" id="3.30.499.10:FF:000008">
    <property type="entry name" value="Aconitate hydratase B"/>
    <property type="match status" value="1"/>
</dbReference>
<dbReference type="Gene3D" id="3.40.1060.10">
    <property type="entry name" value="Aconitase, Domain 2"/>
    <property type="match status" value="1"/>
</dbReference>
<dbReference type="Gene3D" id="3.30.499.10">
    <property type="entry name" value="Aconitase, domain 3"/>
    <property type="match status" value="2"/>
</dbReference>
<dbReference type="Gene3D" id="3.20.19.10">
    <property type="entry name" value="Aconitase, domain 4"/>
    <property type="match status" value="1"/>
</dbReference>
<dbReference type="Gene3D" id="1.25.40.310">
    <property type="entry name" value="Aconitate B, HEAT-like domain"/>
    <property type="match status" value="1"/>
</dbReference>
<dbReference type="InterPro" id="IPR015931">
    <property type="entry name" value="Acnase/IPM_dHydase_lsu_aba_1/3"/>
</dbReference>
<dbReference type="InterPro" id="IPR001030">
    <property type="entry name" value="Acoase/IPM_deHydtase_lsu_aba"/>
</dbReference>
<dbReference type="InterPro" id="IPR015928">
    <property type="entry name" value="Aconitase/3IPM_dehydase_swvl"/>
</dbReference>
<dbReference type="InterPro" id="IPR050926">
    <property type="entry name" value="Aconitase/IPM_isomerase"/>
</dbReference>
<dbReference type="InterPro" id="IPR018136">
    <property type="entry name" value="Aconitase_4Fe-4S_BS"/>
</dbReference>
<dbReference type="InterPro" id="IPR036008">
    <property type="entry name" value="Aconitase_4Fe-4S_dom"/>
</dbReference>
<dbReference type="InterPro" id="IPR004406">
    <property type="entry name" value="Aconitase_B"/>
</dbReference>
<dbReference type="InterPro" id="IPR015933">
    <property type="entry name" value="Aconitase_B_HEAT-like_dom"/>
</dbReference>
<dbReference type="InterPro" id="IPR036288">
    <property type="entry name" value="Aconitase_B_HEAT-like_dom_sf"/>
</dbReference>
<dbReference type="InterPro" id="IPR015929">
    <property type="entry name" value="Aconitase_B_swivel"/>
</dbReference>
<dbReference type="InterPro" id="IPR015932">
    <property type="entry name" value="Aconitase_dom2"/>
</dbReference>
<dbReference type="NCBIfam" id="TIGR00117">
    <property type="entry name" value="acnB"/>
    <property type="match status" value="1"/>
</dbReference>
<dbReference type="NCBIfam" id="NF006690">
    <property type="entry name" value="PRK09238.1"/>
    <property type="match status" value="1"/>
</dbReference>
<dbReference type="PANTHER" id="PTHR43160">
    <property type="entry name" value="ACONITATE HYDRATASE B"/>
    <property type="match status" value="1"/>
</dbReference>
<dbReference type="PANTHER" id="PTHR43160:SF4">
    <property type="entry name" value="ACONITATE HYDRATASE B"/>
    <property type="match status" value="1"/>
</dbReference>
<dbReference type="Pfam" id="PF00330">
    <property type="entry name" value="Aconitase"/>
    <property type="match status" value="2"/>
</dbReference>
<dbReference type="Pfam" id="PF06434">
    <property type="entry name" value="Aconitase_2_N"/>
    <property type="match status" value="1"/>
</dbReference>
<dbReference type="Pfam" id="PF11791">
    <property type="entry name" value="Aconitase_B_N"/>
    <property type="match status" value="1"/>
</dbReference>
<dbReference type="PIRSF" id="PIRSF036687">
    <property type="entry name" value="AcnB"/>
    <property type="match status" value="1"/>
</dbReference>
<dbReference type="SUPFAM" id="SSF74778">
    <property type="entry name" value="Aconitase B, N-terminal domain"/>
    <property type="match status" value="1"/>
</dbReference>
<dbReference type="SUPFAM" id="SSF53732">
    <property type="entry name" value="Aconitase iron-sulfur domain"/>
    <property type="match status" value="1"/>
</dbReference>
<dbReference type="SUPFAM" id="SSF52016">
    <property type="entry name" value="LeuD/IlvD-like"/>
    <property type="match status" value="1"/>
</dbReference>
<dbReference type="PROSITE" id="PS00450">
    <property type="entry name" value="ACONITASE_1"/>
    <property type="match status" value="1"/>
</dbReference>
<keyword id="KW-0004">4Fe-4S</keyword>
<keyword id="KW-0408">Iron</keyword>
<keyword id="KW-0411">Iron-sulfur</keyword>
<keyword id="KW-0456">Lyase</keyword>
<keyword id="KW-0479">Metal-binding</keyword>
<keyword id="KW-1185">Reference proteome</keyword>
<keyword id="KW-0694">RNA-binding</keyword>
<keyword id="KW-0816">Tricarboxylic acid cycle</keyword>
<comment type="function">
    <text evidence="1">Involved in the catabolism of short chain fatty acids (SCFA) via the tricarboxylic acid (TCA)(acetyl degradation route) and probably via the 2-methylcitrate cycle I (propionate degradation route). Catalyzes the reversible isomerization of citrate to isocitrate via cis-aconitate. Catalyzes the hydration of 2-methyl-cis-aconitate to yield (2R,3S)-2-methylisocitrate. The apo form of AcnB functions as a RNA-binding regulatory protein.</text>
</comment>
<comment type="catalytic activity">
    <reaction evidence="1">
        <text>citrate = D-threo-isocitrate</text>
        <dbReference type="Rhea" id="RHEA:10336"/>
        <dbReference type="ChEBI" id="CHEBI:15562"/>
        <dbReference type="ChEBI" id="CHEBI:16947"/>
        <dbReference type="EC" id="4.2.1.3"/>
    </reaction>
</comment>
<comment type="catalytic activity">
    <reaction evidence="1">
        <text>(2S,3R)-3-hydroxybutane-1,2,3-tricarboxylate = 2-methyl-cis-aconitate + H2O</text>
        <dbReference type="Rhea" id="RHEA:17941"/>
        <dbReference type="ChEBI" id="CHEBI:15377"/>
        <dbReference type="ChEBI" id="CHEBI:57429"/>
        <dbReference type="ChEBI" id="CHEBI:57872"/>
        <dbReference type="EC" id="4.2.1.99"/>
    </reaction>
</comment>
<comment type="cofactor">
    <cofactor evidence="1">
        <name>[4Fe-4S] cluster</name>
        <dbReference type="ChEBI" id="CHEBI:49883"/>
    </cofactor>
    <text evidence="1">Binds 1 [4Fe-4S] cluster per subunit.</text>
</comment>
<comment type="pathway">
    <text evidence="1">Carbohydrate metabolism; tricarboxylic acid cycle; isocitrate from oxaloacetate: step 2/2.</text>
</comment>
<comment type="pathway">
    <text evidence="1">Organic acid metabolism; propanoate degradation.</text>
</comment>
<comment type="subunit">
    <text evidence="1">Monomer.</text>
</comment>
<comment type="similarity">
    <text evidence="2">Belongs to the aconitase/IPM isomerase family.</text>
</comment>
<sequence>MLEAYRKHVEERAAQGVVPQPLNAEQTAGLVELLKNPPAGEEEFLLDLITNRVPPGVDEAAYVKAGFLSAIVKGEATSPLIDKQRAAELLGTMQGGYNIATLVELLDDAELANTAAEQLKHTLLMFDAFHDVAERAKKGNAAAKSVLQSWADGEWFKAKPEVPEKLTLTVFKVPGETNTDDLSPAPDAWSRPDIPLHALAMLKMARDGIEPVQPGSVGPLKQIEAVKAKGFPVAYVGDVVGTGSSRKSATNSVLWFFGDDIPFVPNKRAGGFCFGTKIAPIFYNTMEDAGALPIEFDCTNLAMGDVIDVYPYEGKVVRHDSGEVVTTFELKTPVLLDEVRAGGRIPLIVGRGLTEKARAELGLGASDLFRKPEAPADSGKGFTLAQKMVGRACGLPEGQGVRPGTYCEPKMTTVGSQDTTGPMTRDELKDLACLGFSADLVMQSFCHTAAYPKPIDVKTHHTLPDFIMTRGGVSLRPGDGIIHSWLNRMLLPDTVGTGGDSHTRFPIGISFPAGSGLVAFAAATGVMPLDMPESVLVRFKGKLQPGITLRDLVHAIPYYAIQQGLLTVEKKGKKNIFSGRILEIEGLNDLTVEQAFELSDASAERSAAGCTIKLPEQAIAEYLKSNITLLRWMIGEGYGDPRTLERRAQAMEAWLAKPELLEADKDAEYAAVIEIDLADVKEPVLCAPNDPDDARLLSSVQGRKIDEVFIGSCMTNIGHFRAAGKLLDKVKGGIPTRLWLAPPTKMDAHQLTEEGYYGIYGKAGARMEMPGCSLCMGNQARVQTGSTVVSTSTRNFPNRLGDATDVFLASAELAAVSSILGKLPTVEEYMAYAKDIDSMAADVYRYLSFDQIAEFREAAANAKIPVVQA</sequence>
<name>ACNB_PSEAE</name>
<protein>
    <recommendedName>
        <fullName evidence="1">Aconitate hydratase B</fullName>
        <shortName evidence="1">ACN</shortName>
        <shortName evidence="1">Aconitase</shortName>
        <ecNumber evidence="1">4.2.1.3</ecNumber>
    </recommendedName>
    <alternativeName>
        <fullName evidence="1">(2R,3S)-2-methylisocitrate dehydratase</fullName>
    </alternativeName>
    <alternativeName>
        <fullName evidence="1">(2S,3R)-3-hydroxybutane-1,2,3-tricarboxylate dehydratase</fullName>
    </alternativeName>
    <alternativeName>
        <fullName evidence="1">2-methyl-cis-aconitate hydratase</fullName>
        <ecNumber evidence="1">4.2.1.99</ecNumber>
    </alternativeName>
    <alternativeName>
        <fullName evidence="1">Iron-responsive protein-like</fullName>
        <shortName evidence="1">IRP-like</shortName>
    </alternativeName>
    <alternativeName>
        <fullName evidence="1">RNA-binding protein</fullName>
    </alternativeName>
</protein>